<evidence type="ECO:0000255" key="1">
    <source>
        <dbReference type="HAMAP-Rule" id="MF_01382"/>
    </source>
</evidence>
<keyword id="KW-0067">ATP-binding</keyword>
<keyword id="KW-0997">Cell inner membrane</keyword>
<keyword id="KW-1003">Cell membrane</keyword>
<keyword id="KW-0963">Cytoplasm</keyword>
<keyword id="KW-0472">Membrane</keyword>
<keyword id="KW-0479">Metal-binding</keyword>
<keyword id="KW-0547">Nucleotide-binding</keyword>
<keyword id="KW-0653">Protein transport</keyword>
<keyword id="KW-1278">Translocase</keyword>
<keyword id="KW-0811">Translocation</keyword>
<keyword id="KW-0813">Transport</keyword>
<keyword id="KW-0862">Zinc</keyword>
<sequence>MFSILKKLFGTANDRTVKKLFSEITKINSLEPAIKILSDAALKNKTVEFKEKLKNGATLDDILYEAFAVVREAASRVCGMRHFDVQLIGGLILHRGMIAEMRTGEGKTLVATLPAYLNALTGKGVHVVTVNDYLAIRDSASMGKIYNFLGLSVGCIVAGMTDEAKRIAYNSDITHATNNELGFDYLRDNMKYSMQERVLRPFNFAIIDEVDSILIDEARTPIVISGPVNDNSALYGKIDKIIRLLNDSDFEKDEKLKTINLTEVGITNIESLLIKDGIIKPDTGLYDFENLNLVHYVNQALRAHHMFTVDVDYLVREGKVMIIDEFTGRVMEGRRYSEGLHQALEAKENVKIQNENQTLASITFQNYFRNYHKLSGMTGTSMTEASELKDIYNLDVVAVPTHNKVTRIDLDDEIYGSKQEKYDAILKLIRDCYNRGQPILVGTISIEKSEELSSILNKEKIPHNVLNAKFHEQEAFIIAQAGRFKAVTIATNMAGRGTDIMLGGNPEMLIEQLNKDRNYVAKTAEIKAQIAEEKQKVIETGGLFVIGTERHESRRIDNQLRGRSGRQGDPGKTQFFLSLDDDLMRIFASDRISGVLRTLGLKNGEAIHHPMISRSLEKAQQKVEAHNYEMRKNLLRFDDVMNDQRKIIYEQRTEIIKSKDSYGFLNSTTEELARKIVLTFMPLGSYREDWDIDNLTVELHRIFSIKFDHNLVHKNDVTEEDITKLVIQMAHDIYKSKEEAYSSELMNNAVKYILLTTLDQVWKDHLYSLDHLRQGISLRAYAQKDPLSEYKREAFNLFEQMLNNLKELFIQTVYHFHIDLRHLQKEDISLEHKKLQKNMCESREDPAFSKYNAGNSIETYLKPVVLRVDPKDRKPDDPMSWGRVSRNELCPCGSGKKYKYCHGAN</sequence>
<feature type="chain" id="PRO_0000277302" description="Protein translocase subunit SecA">
    <location>
        <begin position="1"/>
        <end position="905"/>
    </location>
</feature>
<feature type="binding site" evidence="1">
    <location>
        <position position="86"/>
    </location>
    <ligand>
        <name>ATP</name>
        <dbReference type="ChEBI" id="CHEBI:30616"/>
    </ligand>
</feature>
<feature type="binding site" evidence="1">
    <location>
        <begin position="104"/>
        <end position="108"/>
    </location>
    <ligand>
        <name>ATP</name>
        <dbReference type="ChEBI" id="CHEBI:30616"/>
    </ligand>
</feature>
<feature type="binding site" evidence="1">
    <location>
        <position position="499"/>
    </location>
    <ligand>
        <name>ATP</name>
        <dbReference type="ChEBI" id="CHEBI:30616"/>
    </ligand>
</feature>
<feature type="binding site" evidence="1">
    <location>
        <position position="890"/>
    </location>
    <ligand>
        <name>Zn(2+)</name>
        <dbReference type="ChEBI" id="CHEBI:29105"/>
    </ligand>
</feature>
<feature type="binding site" evidence="1">
    <location>
        <position position="892"/>
    </location>
    <ligand>
        <name>Zn(2+)</name>
        <dbReference type="ChEBI" id="CHEBI:29105"/>
    </ligand>
</feature>
<feature type="binding site" evidence="1">
    <location>
        <position position="901"/>
    </location>
    <ligand>
        <name>Zn(2+)</name>
        <dbReference type="ChEBI" id="CHEBI:29105"/>
    </ligand>
</feature>
<feature type="binding site" evidence="1">
    <location>
        <position position="902"/>
    </location>
    <ligand>
        <name>Zn(2+)</name>
        <dbReference type="ChEBI" id="CHEBI:29105"/>
    </ligand>
</feature>
<proteinExistence type="inferred from homology"/>
<dbReference type="EC" id="7.4.2.8" evidence="1"/>
<dbReference type="EMBL" id="AE017197">
    <property type="protein sequence ID" value="AAU04031.1"/>
    <property type="molecule type" value="Genomic_DNA"/>
</dbReference>
<dbReference type="EMBL" id="AY386402">
    <property type="protein sequence ID" value="AAQ96293.1"/>
    <property type="molecule type" value="Genomic_DNA"/>
</dbReference>
<dbReference type="RefSeq" id="WP_011191012.1">
    <property type="nucleotide sequence ID" value="NC_006142.1"/>
</dbReference>
<dbReference type="SMR" id="Q6TUJ8"/>
<dbReference type="KEGG" id="rty:RT0564"/>
<dbReference type="eggNOG" id="COG0653">
    <property type="taxonomic scope" value="Bacteria"/>
</dbReference>
<dbReference type="HOGENOM" id="CLU_005314_3_0_5"/>
<dbReference type="OrthoDB" id="9805579at2"/>
<dbReference type="Proteomes" id="UP000000604">
    <property type="component" value="Chromosome"/>
</dbReference>
<dbReference type="GO" id="GO:0031522">
    <property type="term" value="C:cell envelope Sec protein transport complex"/>
    <property type="evidence" value="ECO:0007669"/>
    <property type="project" value="TreeGrafter"/>
</dbReference>
<dbReference type="GO" id="GO:0005829">
    <property type="term" value="C:cytosol"/>
    <property type="evidence" value="ECO:0007669"/>
    <property type="project" value="TreeGrafter"/>
</dbReference>
<dbReference type="GO" id="GO:0005886">
    <property type="term" value="C:plasma membrane"/>
    <property type="evidence" value="ECO:0007669"/>
    <property type="project" value="UniProtKB-SubCell"/>
</dbReference>
<dbReference type="GO" id="GO:0005524">
    <property type="term" value="F:ATP binding"/>
    <property type="evidence" value="ECO:0007669"/>
    <property type="project" value="UniProtKB-UniRule"/>
</dbReference>
<dbReference type="GO" id="GO:0046872">
    <property type="term" value="F:metal ion binding"/>
    <property type="evidence" value="ECO:0007669"/>
    <property type="project" value="UniProtKB-KW"/>
</dbReference>
<dbReference type="GO" id="GO:0008564">
    <property type="term" value="F:protein-exporting ATPase activity"/>
    <property type="evidence" value="ECO:0007669"/>
    <property type="project" value="UniProtKB-EC"/>
</dbReference>
<dbReference type="GO" id="GO:0065002">
    <property type="term" value="P:intracellular protein transmembrane transport"/>
    <property type="evidence" value="ECO:0007669"/>
    <property type="project" value="UniProtKB-UniRule"/>
</dbReference>
<dbReference type="GO" id="GO:0017038">
    <property type="term" value="P:protein import"/>
    <property type="evidence" value="ECO:0007669"/>
    <property type="project" value="InterPro"/>
</dbReference>
<dbReference type="GO" id="GO:0006605">
    <property type="term" value="P:protein targeting"/>
    <property type="evidence" value="ECO:0007669"/>
    <property type="project" value="UniProtKB-UniRule"/>
</dbReference>
<dbReference type="GO" id="GO:0043952">
    <property type="term" value="P:protein transport by the Sec complex"/>
    <property type="evidence" value="ECO:0007669"/>
    <property type="project" value="TreeGrafter"/>
</dbReference>
<dbReference type="CDD" id="cd17928">
    <property type="entry name" value="DEXDc_SecA"/>
    <property type="match status" value="1"/>
</dbReference>
<dbReference type="CDD" id="cd18803">
    <property type="entry name" value="SF2_C_secA"/>
    <property type="match status" value="1"/>
</dbReference>
<dbReference type="FunFam" id="3.40.50.300:FF:000113">
    <property type="entry name" value="Preprotein translocase subunit SecA"/>
    <property type="match status" value="1"/>
</dbReference>
<dbReference type="FunFam" id="3.90.1440.10:FF:000001">
    <property type="entry name" value="Preprotein translocase subunit SecA"/>
    <property type="match status" value="1"/>
</dbReference>
<dbReference type="FunFam" id="1.10.3060.10:FF:000003">
    <property type="entry name" value="Protein translocase subunit SecA"/>
    <property type="match status" value="1"/>
</dbReference>
<dbReference type="FunFam" id="3.40.50.300:FF:000334">
    <property type="entry name" value="Protein translocase subunit SecA"/>
    <property type="match status" value="1"/>
</dbReference>
<dbReference type="Gene3D" id="1.10.3060.10">
    <property type="entry name" value="Helical scaffold and wing domains of SecA"/>
    <property type="match status" value="1"/>
</dbReference>
<dbReference type="Gene3D" id="3.40.50.300">
    <property type="entry name" value="P-loop containing nucleotide triphosphate hydrolases"/>
    <property type="match status" value="2"/>
</dbReference>
<dbReference type="Gene3D" id="3.90.1440.10">
    <property type="entry name" value="SecA, preprotein cross-linking domain"/>
    <property type="match status" value="1"/>
</dbReference>
<dbReference type="HAMAP" id="MF_01382">
    <property type="entry name" value="SecA"/>
    <property type="match status" value="1"/>
</dbReference>
<dbReference type="InterPro" id="IPR014001">
    <property type="entry name" value="Helicase_ATP-bd"/>
</dbReference>
<dbReference type="InterPro" id="IPR001650">
    <property type="entry name" value="Helicase_C-like"/>
</dbReference>
<dbReference type="InterPro" id="IPR027417">
    <property type="entry name" value="P-loop_NTPase"/>
</dbReference>
<dbReference type="InterPro" id="IPR004027">
    <property type="entry name" value="SEC_C_motif"/>
</dbReference>
<dbReference type="InterPro" id="IPR000185">
    <property type="entry name" value="SecA"/>
</dbReference>
<dbReference type="InterPro" id="IPR020937">
    <property type="entry name" value="SecA_CS"/>
</dbReference>
<dbReference type="InterPro" id="IPR011115">
    <property type="entry name" value="SecA_DEAD"/>
</dbReference>
<dbReference type="InterPro" id="IPR014018">
    <property type="entry name" value="SecA_motor_DEAD"/>
</dbReference>
<dbReference type="InterPro" id="IPR011130">
    <property type="entry name" value="SecA_preprotein_X-link_dom"/>
</dbReference>
<dbReference type="InterPro" id="IPR044722">
    <property type="entry name" value="SecA_SF2_C"/>
</dbReference>
<dbReference type="InterPro" id="IPR011116">
    <property type="entry name" value="SecA_Wing/Scaffold"/>
</dbReference>
<dbReference type="InterPro" id="IPR036266">
    <property type="entry name" value="SecA_Wing/Scaffold_sf"/>
</dbReference>
<dbReference type="InterPro" id="IPR036670">
    <property type="entry name" value="SecA_X-link_sf"/>
</dbReference>
<dbReference type="NCBIfam" id="NF009538">
    <property type="entry name" value="PRK12904.1"/>
    <property type="match status" value="1"/>
</dbReference>
<dbReference type="NCBIfam" id="TIGR00963">
    <property type="entry name" value="secA"/>
    <property type="match status" value="1"/>
</dbReference>
<dbReference type="PANTHER" id="PTHR30612:SF0">
    <property type="entry name" value="CHLOROPLAST PROTEIN-TRANSPORTING ATPASE"/>
    <property type="match status" value="1"/>
</dbReference>
<dbReference type="PANTHER" id="PTHR30612">
    <property type="entry name" value="SECA INNER MEMBRANE COMPONENT OF SEC PROTEIN SECRETION SYSTEM"/>
    <property type="match status" value="1"/>
</dbReference>
<dbReference type="Pfam" id="PF21090">
    <property type="entry name" value="P-loop_SecA"/>
    <property type="match status" value="1"/>
</dbReference>
<dbReference type="Pfam" id="PF02810">
    <property type="entry name" value="SEC-C"/>
    <property type="match status" value="1"/>
</dbReference>
<dbReference type="Pfam" id="PF07517">
    <property type="entry name" value="SecA_DEAD"/>
    <property type="match status" value="1"/>
</dbReference>
<dbReference type="Pfam" id="PF01043">
    <property type="entry name" value="SecA_PP_bind"/>
    <property type="match status" value="1"/>
</dbReference>
<dbReference type="Pfam" id="PF07516">
    <property type="entry name" value="SecA_SW"/>
    <property type="match status" value="1"/>
</dbReference>
<dbReference type="PRINTS" id="PR00906">
    <property type="entry name" value="SECA"/>
</dbReference>
<dbReference type="SMART" id="SM00957">
    <property type="entry name" value="SecA_DEAD"/>
    <property type="match status" value="1"/>
</dbReference>
<dbReference type="SMART" id="SM00958">
    <property type="entry name" value="SecA_PP_bind"/>
    <property type="match status" value="1"/>
</dbReference>
<dbReference type="SUPFAM" id="SSF81886">
    <property type="entry name" value="Helical scaffold and wing domains of SecA"/>
    <property type="match status" value="1"/>
</dbReference>
<dbReference type="SUPFAM" id="SSF52540">
    <property type="entry name" value="P-loop containing nucleoside triphosphate hydrolases"/>
    <property type="match status" value="2"/>
</dbReference>
<dbReference type="SUPFAM" id="SSF81767">
    <property type="entry name" value="Pre-protein crosslinking domain of SecA"/>
    <property type="match status" value="1"/>
</dbReference>
<dbReference type="PROSITE" id="PS01312">
    <property type="entry name" value="SECA"/>
    <property type="match status" value="1"/>
</dbReference>
<dbReference type="PROSITE" id="PS51196">
    <property type="entry name" value="SECA_MOTOR_DEAD"/>
    <property type="match status" value="1"/>
</dbReference>
<accession>Q6TUJ8</accession>
<reference key="1">
    <citation type="journal article" date="2005" name="Microbiology">
        <title>Functional analysis of secA homologues from rickettsiae.</title>
        <authorList>
            <person name="Rahman M.S."/>
            <person name="Simser J.A."/>
            <person name="Macaluso K.R."/>
            <person name="Azad A.F."/>
        </authorList>
    </citation>
    <scope>NUCLEOTIDE SEQUENCE [GENOMIC DNA]</scope>
    <source>
        <strain>ATCC VR-144 / Wilmington</strain>
    </source>
</reference>
<reference key="2">
    <citation type="journal article" date="2004" name="J. Bacteriol.">
        <title>Complete genome sequence of Rickettsia typhi and comparison with sequences of other Rickettsiae.</title>
        <authorList>
            <person name="McLeod M.P."/>
            <person name="Qin X."/>
            <person name="Karpathy S.E."/>
            <person name="Gioia J."/>
            <person name="Highlander S.K."/>
            <person name="Fox G.E."/>
            <person name="McNeill T.Z."/>
            <person name="Jiang H."/>
            <person name="Muzny D."/>
            <person name="Jacob L.S."/>
            <person name="Hawes A.C."/>
            <person name="Sodergren E."/>
            <person name="Gill R."/>
            <person name="Hume J."/>
            <person name="Morgan M."/>
            <person name="Fan G."/>
            <person name="Amin A.G."/>
            <person name="Gibbs R.A."/>
            <person name="Hong C."/>
            <person name="Yu X.-J."/>
            <person name="Walker D.H."/>
            <person name="Weinstock G.M."/>
        </authorList>
    </citation>
    <scope>NUCLEOTIDE SEQUENCE [LARGE SCALE GENOMIC DNA]</scope>
    <source>
        <strain>ATCC VR-144 / Wilmington</strain>
    </source>
</reference>
<organism>
    <name type="scientific">Rickettsia typhi (strain ATCC VR-144 / Wilmington)</name>
    <dbReference type="NCBI Taxonomy" id="257363"/>
    <lineage>
        <taxon>Bacteria</taxon>
        <taxon>Pseudomonadati</taxon>
        <taxon>Pseudomonadota</taxon>
        <taxon>Alphaproteobacteria</taxon>
        <taxon>Rickettsiales</taxon>
        <taxon>Rickettsiaceae</taxon>
        <taxon>Rickettsieae</taxon>
        <taxon>Rickettsia</taxon>
        <taxon>typhus group</taxon>
    </lineage>
</organism>
<comment type="function">
    <text evidence="1">Part of the Sec protein translocase complex. Interacts with the SecYEG preprotein conducting channel. Has a central role in coupling the hydrolysis of ATP to the transfer of proteins into and across the cell membrane, serving both as a receptor for the preprotein-SecB complex and as an ATP-driven molecular motor driving the stepwise translocation of polypeptide chains across the membrane.</text>
</comment>
<comment type="catalytic activity">
    <reaction evidence="1">
        <text>ATP + H2O + cellular proteinSide 1 = ADP + phosphate + cellular proteinSide 2.</text>
        <dbReference type="EC" id="7.4.2.8"/>
    </reaction>
</comment>
<comment type="cofactor">
    <cofactor evidence="1">
        <name>Zn(2+)</name>
        <dbReference type="ChEBI" id="CHEBI:29105"/>
    </cofactor>
    <text evidence="1">May bind 1 zinc ion per subunit.</text>
</comment>
<comment type="subunit">
    <text evidence="1">Monomer and homodimer. Part of the essential Sec protein translocation apparatus which comprises SecA, SecYEG and auxiliary proteins SecDF-YajC and YidC.</text>
</comment>
<comment type="subcellular location">
    <subcellularLocation>
        <location evidence="1">Cell inner membrane</location>
        <topology evidence="1">Peripheral membrane protein</topology>
        <orientation evidence="1">Cytoplasmic side</orientation>
    </subcellularLocation>
    <subcellularLocation>
        <location evidence="1">Cytoplasm</location>
    </subcellularLocation>
    <text evidence="1">Distribution is 50-50.</text>
</comment>
<comment type="similarity">
    <text evidence="1">Belongs to the SecA family.</text>
</comment>
<protein>
    <recommendedName>
        <fullName evidence="1">Protein translocase subunit SecA</fullName>
        <ecNumber evidence="1">7.4.2.8</ecNumber>
    </recommendedName>
</protein>
<gene>
    <name evidence="1" type="primary">secA</name>
    <name type="ordered locus">RT0564</name>
</gene>
<name>SECA_RICTY</name>